<dbReference type="EMBL" id="M75720">
    <property type="protein sequence ID" value="AAC28868.1"/>
    <property type="molecule type" value="mRNA"/>
</dbReference>
<dbReference type="EMBL" id="BC009818">
    <property type="protein sequence ID" value="AAH09818.1"/>
    <property type="molecule type" value="mRNA"/>
</dbReference>
<dbReference type="EMBL" id="BC010984">
    <property type="protein sequence ID" value="AAH10984.1"/>
    <property type="molecule type" value="mRNA"/>
</dbReference>
<dbReference type="EMBL" id="BC010988">
    <property type="protein sequence ID" value="AAH10988.1"/>
    <property type="molecule type" value="mRNA"/>
</dbReference>
<dbReference type="EMBL" id="BC011041">
    <property type="protein sequence ID" value="AAH11041.1"/>
    <property type="molecule type" value="mRNA"/>
</dbReference>
<dbReference type="EMBL" id="BC015266">
    <property type="protein sequence ID" value="AAH15266.1"/>
    <property type="molecule type" value="mRNA"/>
</dbReference>
<dbReference type="EMBL" id="BC021325">
    <property type="protein sequence ID" value="AAH21325.1"/>
    <property type="molecule type" value="mRNA"/>
</dbReference>
<dbReference type="EMBL" id="BC021780">
    <property type="protein sequence ID" value="AAH21780.1"/>
    <property type="molecule type" value="mRNA"/>
</dbReference>
<dbReference type="EMBL" id="BC024108">
    <property type="protein sequence ID" value="AAH24108.1"/>
    <property type="molecule type" value="mRNA"/>
</dbReference>
<dbReference type="EMBL" id="BC031707">
    <property type="protein sequence ID" value="AAH31707.1"/>
    <property type="molecule type" value="mRNA"/>
</dbReference>
<dbReference type="EMBL" id="X00945">
    <property type="protein sequence ID" value="CAA25457.1"/>
    <property type="molecule type" value="Genomic_DNA"/>
</dbReference>
<dbReference type="PIR" id="I49472">
    <property type="entry name" value="I49472"/>
</dbReference>
<dbReference type="RefSeq" id="NP_033271.1">
    <property type="nucleotide sequence ID" value="NM_009245.2"/>
</dbReference>
<dbReference type="SMR" id="Q00896"/>
<dbReference type="BioGRID" id="423617">
    <property type="interactions" value="12"/>
</dbReference>
<dbReference type="FunCoup" id="Q00896">
    <property type="interactions" value="201"/>
</dbReference>
<dbReference type="STRING" id="10090.ENSMUSP00000073695"/>
<dbReference type="MEROPS" id="I04.001"/>
<dbReference type="GlyCosmos" id="Q00896">
    <property type="glycosylation" value="3 sites, No reported glycans"/>
</dbReference>
<dbReference type="GlyGen" id="Q00896">
    <property type="glycosylation" value="4 sites, 1 O-linked glycan (1 site)"/>
</dbReference>
<dbReference type="iPTMnet" id="Q00896"/>
<dbReference type="PhosphoSitePlus" id="Q00896"/>
<dbReference type="REPRODUCTION-2DPAGE" id="Q00896"/>
<dbReference type="CPTAC" id="non-CPTAC-3682"/>
<dbReference type="jPOST" id="Q00896"/>
<dbReference type="PaxDb" id="10090-ENSMUSP00000073695"/>
<dbReference type="PeptideAtlas" id="Q00896"/>
<dbReference type="ProteomicsDB" id="285694"/>
<dbReference type="DNASU" id="20702"/>
<dbReference type="GeneID" id="20702"/>
<dbReference type="KEGG" id="mmu:20702"/>
<dbReference type="UCSC" id="uc007owk.1">
    <property type="organism name" value="mouse"/>
</dbReference>
<dbReference type="AGR" id="MGI:891969"/>
<dbReference type="CTD" id="20702"/>
<dbReference type="MGI" id="MGI:891969">
    <property type="gene designation" value="Serpina1c"/>
</dbReference>
<dbReference type="eggNOG" id="KOG2392">
    <property type="taxonomic scope" value="Eukaryota"/>
</dbReference>
<dbReference type="InParanoid" id="Q00896"/>
<dbReference type="OrthoDB" id="671595at2759"/>
<dbReference type="PhylomeDB" id="Q00896"/>
<dbReference type="TreeFam" id="TF343201"/>
<dbReference type="Reactome" id="R-MMU-114608">
    <property type="pathway name" value="Platelet degranulation"/>
</dbReference>
<dbReference type="Reactome" id="R-MMU-204005">
    <property type="pathway name" value="COPII-mediated vesicle transport"/>
</dbReference>
<dbReference type="Reactome" id="R-MMU-381426">
    <property type="pathway name" value="Regulation of Insulin-like Growth Factor (IGF) transport and uptake by Insulin-like Growth Factor Binding Proteins (IGFBPs)"/>
</dbReference>
<dbReference type="Reactome" id="R-MMU-5694530">
    <property type="pathway name" value="Cargo concentration in the ER"/>
</dbReference>
<dbReference type="Reactome" id="R-MMU-6798695">
    <property type="pathway name" value="Neutrophil degranulation"/>
</dbReference>
<dbReference type="Reactome" id="R-MMU-8957275">
    <property type="pathway name" value="Post-translational protein phosphorylation"/>
</dbReference>
<dbReference type="BioGRID-ORCS" id="20702">
    <property type="hits" value="2 hits in 41 CRISPR screens"/>
</dbReference>
<dbReference type="ChiTaRS" id="Serpina1c">
    <property type="organism name" value="mouse"/>
</dbReference>
<dbReference type="PRO" id="PR:Q00896"/>
<dbReference type="Proteomes" id="UP000000589">
    <property type="component" value="Unplaced"/>
</dbReference>
<dbReference type="RNAct" id="Q00896">
    <property type="molecule type" value="protein"/>
</dbReference>
<dbReference type="GO" id="GO:0005576">
    <property type="term" value="C:extracellular region"/>
    <property type="evidence" value="ECO:0000314"/>
    <property type="project" value="MGI"/>
</dbReference>
<dbReference type="GO" id="GO:0005615">
    <property type="term" value="C:extracellular space"/>
    <property type="evidence" value="ECO:0007669"/>
    <property type="project" value="InterPro"/>
</dbReference>
<dbReference type="GO" id="GO:0004867">
    <property type="term" value="F:serine-type endopeptidase inhibitor activity"/>
    <property type="evidence" value="ECO:0007669"/>
    <property type="project" value="UniProtKB-KW"/>
</dbReference>
<dbReference type="GO" id="GO:0034097">
    <property type="term" value="P:response to cytokine"/>
    <property type="evidence" value="ECO:0000314"/>
    <property type="project" value="MGI"/>
</dbReference>
<dbReference type="GO" id="GO:0043434">
    <property type="term" value="P:response to peptide hormone"/>
    <property type="evidence" value="ECO:0000314"/>
    <property type="project" value="MGI"/>
</dbReference>
<dbReference type="CDD" id="cd02056">
    <property type="entry name" value="serpinA1_A1AT"/>
    <property type="match status" value="1"/>
</dbReference>
<dbReference type="FunFam" id="2.30.39.10:FF:000003">
    <property type="entry name" value="alpha-1-antitrypsin isoform X1"/>
    <property type="match status" value="1"/>
</dbReference>
<dbReference type="FunFam" id="3.30.497.10:FF:000001">
    <property type="entry name" value="Serine protease inhibitor"/>
    <property type="match status" value="1"/>
</dbReference>
<dbReference type="FunFam" id="2.10.310.10:FF:000001">
    <property type="entry name" value="Serpin family A member 1"/>
    <property type="match status" value="1"/>
</dbReference>
<dbReference type="Gene3D" id="2.30.39.10">
    <property type="entry name" value="Alpha-1-antitrypsin, domain 1"/>
    <property type="match status" value="1"/>
</dbReference>
<dbReference type="Gene3D" id="3.30.497.10">
    <property type="entry name" value="Antithrombin, subunit I, domain 2"/>
    <property type="match status" value="1"/>
</dbReference>
<dbReference type="Gene3D" id="2.10.310.10">
    <property type="entry name" value="Serpins superfamily"/>
    <property type="match status" value="1"/>
</dbReference>
<dbReference type="InterPro" id="IPR023795">
    <property type="entry name" value="Serpin_CS"/>
</dbReference>
<dbReference type="InterPro" id="IPR023796">
    <property type="entry name" value="Serpin_dom"/>
</dbReference>
<dbReference type="InterPro" id="IPR000215">
    <property type="entry name" value="Serpin_fam"/>
</dbReference>
<dbReference type="InterPro" id="IPR036186">
    <property type="entry name" value="Serpin_sf"/>
</dbReference>
<dbReference type="InterPro" id="IPR042178">
    <property type="entry name" value="Serpin_sf_1"/>
</dbReference>
<dbReference type="InterPro" id="IPR042185">
    <property type="entry name" value="Serpin_sf_2"/>
</dbReference>
<dbReference type="PANTHER" id="PTHR11461:SF165">
    <property type="entry name" value="ALPHA-1-ANTITRYPSIN"/>
    <property type="match status" value="1"/>
</dbReference>
<dbReference type="PANTHER" id="PTHR11461">
    <property type="entry name" value="SERINE PROTEASE INHIBITOR, SERPIN"/>
    <property type="match status" value="1"/>
</dbReference>
<dbReference type="Pfam" id="PF00079">
    <property type="entry name" value="Serpin"/>
    <property type="match status" value="1"/>
</dbReference>
<dbReference type="SMART" id="SM00093">
    <property type="entry name" value="SERPIN"/>
    <property type="match status" value="1"/>
</dbReference>
<dbReference type="SUPFAM" id="SSF56574">
    <property type="entry name" value="Serpins"/>
    <property type="match status" value="1"/>
</dbReference>
<dbReference type="PROSITE" id="PS00284">
    <property type="entry name" value="SERPIN"/>
    <property type="match status" value="1"/>
</dbReference>
<protein>
    <recommendedName>
        <fullName>Alpha-1-antitrypsin 1-3</fullName>
    </recommendedName>
    <alternativeName>
        <fullName>Alpha-1 protease inhibitor 3</fullName>
    </alternativeName>
    <alternativeName>
        <fullName>Alpha-1 protease inhibitor 6</fullName>
    </alternativeName>
    <alternativeName>
        <fullName>Alpha-1-antitrypsin 1-6</fullName>
    </alternativeName>
    <alternativeName>
        <fullName>Serine protease inhibitor 1-3</fullName>
    </alternativeName>
    <alternativeName>
        <fullName>Serine protease inhibitor 1-6</fullName>
    </alternativeName>
    <alternativeName>
        <fullName>Serine protease inhibitor A1c</fullName>
        <shortName>Serpin A1c</shortName>
    </alternativeName>
</protein>
<accession>Q00896</accession>
<accession>P81105</accession>
<accession>Q91V74</accession>
<accession>Q91WH5</accession>
<accession>Q91XC1</accession>
<sequence length="412" mass="45823">MTPSISWGLLLLAGLCCLVPSFLAEDVQETDTSQKDQSPASHEIATNLGDFAISLYRELVHQSNTSNIFFSPVSIATAFAMLSLGSKGDTHTQILEGLQFNLTQTSEADIHKSFQHLLQTLNRPDSELQLSTGNGLFVNNDLKLVEKFLEEAKNHYQAEVFSVNFAESEEAKKVINDFVEKGTQGKIVEAVKKLDQDTVFALANYILFKGKWKKPFDPENTEEAEFHVDESTTVKVPMMTLSGMLDVHHCSTLSSWVLLMDYAGNATAVFLLPDDGKMQHLEQTLSKELISKFLLNRRRRLAQIHFPRLSISGEYNLKTLMSPLGITRIFNNGADLSGITEENAPLKLSQAVHKAVLTIDETGTEAAAVTVLLAVPYSMPPILRFDHPFLFIIFEEHTQSPLFVGKVVDPTH</sequence>
<evidence type="ECO:0000250" key="1"/>
<evidence type="ECO:0000255" key="2"/>
<evidence type="ECO:0000269" key="3">
    <source>
    </source>
</evidence>
<evidence type="ECO:0000269" key="4">
    <source>
    </source>
</evidence>
<evidence type="ECO:0000269" key="5">
    <source>
    </source>
</evidence>
<evidence type="ECO:0000305" key="6"/>
<comment type="function">
    <text evidence="3 5">Inhibitor of serine proteases. Can inhibit trypsin and chymotrypsin; relatively ineffective against elastase.</text>
</comment>
<comment type="subcellular location">
    <subcellularLocation>
        <location evidence="3 5">Secreted</location>
    </subcellularLocation>
</comment>
<comment type="domain">
    <text evidence="1">The reactive center loop (RCL) extends out from the body of the protein and directs binding to the target protease. The protease cleaves the serpin at the reactive site within the RCL, establishing a covalent linkage between the carboxyl group of the serpin reactive site and the serine hydroxyl of the protease. The resulting inactive serpin-protease complex is highly stable (By similarity). Variability within the reactive center loop (RCL) sequences of Serpina1-related genes may determine target protease specificity.</text>
</comment>
<comment type="miscellaneous">
    <text>Murine alpha-1-antitrypsin is represented by a cluster of up to 6 individual Serpina1-related genes. The precise complement of Serpina1-related genes present varies according to the strain of the animal.</text>
</comment>
<comment type="similarity">
    <text evidence="6">Belongs to the serpin family.</text>
</comment>
<gene>
    <name type="primary">Serpina1c</name>
    <name type="synonym">Dom3</name>
    <name type="synonym">Dom6</name>
    <name type="synonym">Spi1-3</name>
    <name type="synonym">Spi1-6</name>
</gene>
<feature type="signal peptide" evidence="2">
    <location>
        <begin position="1"/>
        <end position="24"/>
    </location>
</feature>
<feature type="chain" id="PRO_0000032390" description="Alpha-1-antitrypsin 1-3">
    <location>
        <begin position="25"/>
        <end position="412"/>
    </location>
</feature>
<feature type="region of interest" description="RCL">
    <location>
        <begin position="368"/>
        <end position="387"/>
    </location>
</feature>
<feature type="site" description="Reactive bond" evidence="1">
    <location>
        <begin position="377"/>
        <end position="378"/>
    </location>
</feature>
<feature type="glycosylation site" description="N-linked (GlcNAc...) asparagine" evidence="2">
    <location>
        <position position="64"/>
    </location>
</feature>
<feature type="glycosylation site" description="N-linked (GlcNAc...) asparagine" evidence="2">
    <location>
        <position position="101"/>
    </location>
</feature>
<feature type="glycosylation site" description="N-linked (GlcNAc...) asparagine" evidence="4">
    <location>
        <position position="265"/>
    </location>
</feature>
<feature type="sequence conflict" description="In Ref. 2; AAH10988." evidence="6" ref="2">
    <original>M</original>
    <variation>HASGDLELADAWV</variation>
    <location>
        <position position="1"/>
    </location>
</feature>
<feature type="sequence conflict" description="In Ref. 1; AAC28868 and 2; AAH10988." evidence="6" ref="1 2">
    <original>V</original>
    <variation>A</variation>
    <location>
        <position position="188"/>
    </location>
</feature>
<feature type="sequence conflict" description="In Ref. 1; AAC28868." evidence="6" ref="1">
    <original>NRR</original>
    <variation>KRP</variation>
    <location>
        <begin position="296"/>
        <end position="298"/>
    </location>
</feature>
<feature type="sequence conflict" description="In Ref. 1; AAC28868." evidence="6" ref="1">
    <original>I</original>
    <variation>M</variation>
    <location>
        <position position="359"/>
    </location>
</feature>
<feature type="sequence conflict" description="In Ref. 1; AAC28868." evidence="6" ref="1">
    <original>V</original>
    <variation>A</variation>
    <location>
        <position position="369"/>
    </location>
</feature>
<feature type="sequence conflict" description="In Ref. 1; AAC28868." evidence="6" ref="1">
    <original>L</original>
    <variation>V</variation>
    <location>
        <position position="383"/>
    </location>
</feature>
<feature type="sequence conflict" description="In Ref. 1; AAC28868." evidence="6" ref="1">
    <original>H</original>
    <variation>HK</variation>
    <location>
        <position position="412"/>
    </location>
</feature>
<reference key="1">
    <citation type="journal article" date="1991" name="Proc. Natl. Acad. Sci. U.S.A.">
        <title>Multiple murine alpha 1-protease inhibitor genes show unusual evolutionary divergence.</title>
        <authorList>
            <person name="Borriello F."/>
            <person name="Krauter K.S."/>
        </authorList>
    </citation>
    <scope>NUCLEOTIDE SEQUENCE [MRNA]</scope>
    <source>
        <strain>C57BL/6J</strain>
        <tissue>Liver</tissue>
    </source>
</reference>
<reference key="2">
    <citation type="journal article" date="2004" name="Genome Res.">
        <title>The status, quality, and expansion of the NIH full-length cDNA project: the Mammalian Gene Collection (MGC).</title>
        <authorList>
            <consortium name="The MGC Project Team"/>
        </authorList>
    </citation>
    <scope>NUCLEOTIDE SEQUENCE [LARGE SCALE MRNA]</scope>
    <source>
        <strain>FVB/N</strain>
        <tissue>Liver</tissue>
        <tissue>Salivary gland</tissue>
    </source>
</reference>
<reference key="3">
    <citation type="journal article" date="1984" name="Nature">
        <title>Plasma protease inhibitors in mouse and man: divergence within the reactive centre regions.</title>
        <authorList>
            <person name="Hill R.E."/>
            <person name="Shaw P.H."/>
            <person name="Boyd P.A."/>
            <person name="Baumann H."/>
            <person name="Hastie N.D."/>
        </authorList>
    </citation>
    <scope>NUCLEOTIDE SEQUENCE [GENOMIC DNA] OF 203-412</scope>
</reference>
<reference key="4">
    <citation type="journal article" date="1996" name="Biochem. Biophys. Res. Commun.">
        <title>The expression and characterization of five recombinant murine alpha 1-protease inhibitor proteins.</title>
        <authorList>
            <person name="Paterson T."/>
            <person name="Moore S."/>
        </authorList>
    </citation>
    <scope>FUNCTION</scope>
    <scope>SUBCELLULAR LOCATION</scope>
</reference>
<reference key="5">
    <citation type="journal article" date="2002" name="Mol. Biol. Evol.">
        <title>Functional diversification during evolution of the murine alpha(1)-proteinase inhibitor family: role of the hypervariable reactive center loop.</title>
        <authorList>
            <person name="Barbour K.W."/>
            <person name="Goodwin R.L."/>
            <person name="Guillonneau F."/>
            <person name="Wang Y."/>
            <person name="Baumann H."/>
            <person name="Berger F.G."/>
        </authorList>
    </citation>
    <scope>FUNCTION</scope>
    <scope>SUBCELLULAR LOCATION</scope>
    <scope>REGION RCL</scope>
</reference>
<reference key="6">
    <citation type="journal article" date="2003" name="Genomics">
        <title>A review and comparison of the murine alpha1-antitrypsin and alpha1-antichymotrypsin multigene clusters with the human clade A serpins.</title>
        <authorList>
            <person name="Forsyth S."/>
            <person name="Horvath A."/>
            <person name="Coughlin P."/>
        </authorList>
    </citation>
    <scope>GENE FAMILY</scope>
    <scope>NOMENCLATURE</scope>
</reference>
<reference key="7">
    <citation type="journal article" date="2006" name="J. Proteome Res.">
        <title>Proteome-wide characterization of N-glycosylation events by diagonal chromatography.</title>
        <authorList>
            <person name="Ghesquiere B."/>
            <person name="Van Damme J."/>
            <person name="Martens L."/>
            <person name="Vandekerckhove J."/>
            <person name="Gevaert K."/>
        </authorList>
    </citation>
    <scope>GLYCOSYLATION [LARGE SCALE ANALYSIS] AT ASN-265</scope>
    <source>
        <strain>C57BL/6J</strain>
        <tissue>Plasma</tissue>
    </source>
</reference>
<keyword id="KW-0325">Glycoprotein</keyword>
<keyword id="KW-0646">Protease inhibitor</keyword>
<keyword id="KW-1185">Reference proteome</keyword>
<keyword id="KW-0964">Secreted</keyword>
<keyword id="KW-0722">Serine protease inhibitor</keyword>
<keyword id="KW-0732">Signal</keyword>
<name>A1AT3_MOUSE</name>
<proteinExistence type="evidence at protein level"/>
<organism>
    <name type="scientific">Mus musculus</name>
    <name type="common">Mouse</name>
    <dbReference type="NCBI Taxonomy" id="10090"/>
    <lineage>
        <taxon>Eukaryota</taxon>
        <taxon>Metazoa</taxon>
        <taxon>Chordata</taxon>
        <taxon>Craniata</taxon>
        <taxon>Vertebrata</taxon>
        <taxon>Euteleostomi</taxon>
        <taxon>Mammalia</taxon>
        <taxon>Eutheria</taxon>
        <taxon>Euarchontoglires</taxon>
        <taxon>Glires</taxon>
        <taxon>Rodentia</taxon>
        <taxon>Myomorpha</taxon>
        <taxon>Muroidea</taxon>
        <taxon>Muridae</taxon>
        <taxon>Murinae</taxon>
        <taxon>Mus</taxon>
        <taxon>Mus</taxon>
    </lineage>
</organism>